<dbReference type="Allergome" id="11787">
    <property type="allergen name" value="Pun g 5"/>
</dbReference>
<dbReference type="Proteomes" id="UP000515151">
    <property type="component" value="Unplaced"/>
</dbReference>
<dbReference type="GO" id="GO:0042742">
    <property type="term" value="P:defense response to bacterium"/>
    <property type="evidence" value="ECO:0007669"/>
    <property type="project" value="InterPro"/>
</dbReference>
<dbReference type="GO" id="GO:0050832">
    <property type="term" value="P:defense response to fungus"/>
    <property type="evidence" value="ECO:0007669"/>
    <property type="project" value="InterPro"/>
</dbReference>
<dbReference type="InterPro" id="IPR001153">
    <property type="entry name" value="Barwin_dom"/>
</dbReference>
<dbReference type="PROSITE" id="PS51174">
    <property type="entry name" value="BARWIN_3"/>
    <property type="match status" value="1"/>
</dbReference>
<feature type="chain" id="PRO_0000439088" description="Punein" evidence="2">
    <location>
        <begin position="1" status="less than"/>
        <end position="20" status="greater than"/>
    </location>
</feature>
<feature type="domain" description="Barwin" evidence="1">
    <location>
        <begin position="1" status="less than"/>
        <end position="20" status="greater than"/>
    </location>
</feature>
<feature type="non-consecutive residues" evidence="3">
    <location>
        <begin position="10"/>
        <end position="11"/>
    </location>
</feature>
<feature type="non-terminal residue" evidence="3">
    <location>
        <position position="1"/>
    </location>
</feature>
<feature type="non-terminal residue" evidence="3">
    <location>
        <position position="20"/>
    </location>
</feature>
<reference evidence="4" key="1">
    <citation type="submission" date="2017-01" db="UniProtKB">
        <title>Identification of a new protein in pomegranate juice.</title>
        <authorList>
            <person name="Tuppo L."/>
            <person name="Tamburrini M."/>
            <person name="Ciardiello M.A."/>
        </authorList>
    </citation>
    <scope>PROTEIN SEQUENCE</scope>
</reference>
<sequence length="20" mass="2473">YHYYNPEENHFCATWDASKP</sequence>
<organism evidence="3">
    <name type="scientific">Punica granatum</name>
    <name type="common">Pomegranate</name>
    <dbReference type="NCBI Taxonomy" id="22663"/>
    <lineage>
        <taxon>Eukaryota</taxon>
        <taxon>Viridiplantae</taxon>
        <taxon>Streptophyta</taxon>
        <taxon>Embryophyta</taxon>
        <taxon>Tracheophyta</taxon>
        <taxon>Spermatophyta</taxon>
        <taxon>Magnoliopsida</taxon>
        <taxon>eudicotyledons</taxon>
        <taxon>Gunneridae</taxon>
        <taxon>Pentapetalae</taxon>
        <taxon>rosids</taxon>
        <taxon>malvids</taxon>
        <taxon>Myrtales</taxon>
        <taxon>Lythraceae</taxon>
        <taxon>Punica</taxon>
    </lineage>
</organism>
<name>PUN_PUNGR</name>
<protein>
    <recommendedName>
        <fullName evidence="4">Punein</fullName>
    </recommendedName>
</protein>
<proteinExistence type="evidence at protein level"/>
<evidence type="ECO:0000255" key="1">
    <source>
        <dbReference type="PROSITE-ProRule" id="PRU00527"/>
    </source>
</evidence>
<evidence type="ECO:0000269" key="2">
    <source ref="1"/>
</evidence>
<evidence type="ECO:0000303" key="3">
    <source ref="1"/>
</evidence>
<evidence type="ECO:0000305" key="4"/>
<comment type="PTM">
    <text evidence="2">The N-terminus is blocked.</text>
</comment>
<keyword id="KW-0903">Direct protein sequencing</keyword>
<accession>C0HKC6</accession>